<keyword id="KW-1185">Reference proteome</keyword>
<keyword id="KW-0687">Ribonucleoprotein</keyword>
<keyword id="KW-0689">Ribosomal protein</keyword>
<keyword id="KW-0694">RNA-binding</keyword>
<keyword id="KW-0699">rRNA-binding</keyword>
<keyword id="KW-0820">tRNA-binding</keyword>
<comment type="function">
    <text evidence="1">Binds 23S rRNA and is also seen to make contacts with the A and possibly P site tRNAs.</text>
</comment>
<comment type="subunit">
    <text evidence="1">Part of the 50S ribosomal subunit.</text>
</comment>
<comment type="similarity">
    <text evidence="1">Belongs to the universal ribosomal protein uL16 family.</text>
</comment>
<gene>
    <name evidence="1" type="primary">rplP</name>
    <name type="ordered locus">Rleg2_1339</name>
</gene>
<name>RL16_RHILW</name>
<evidence type="ECO:0000255" key="1">
    <source>
        <dbReference type="HAMAP-Rule" id="MF_01342"/>
    </source>
</evidence>
<evidence type="ECO:0000305" key="2"/>
<protein>
    <recommendedName>
        <fullName evidence="1">Large ribosomal subunit protein uL16</fullName>
    </recommendedName>
    <alternativeName>
        <fullName evidence="2">50S ribosomal protein L16</fullName>
    </alternativeName>
</protein>
<feature type="chain" id="PRO_1000143017" description="Large ribosomal subunit protein uL16">
    <location>
        <begin position="1"/>
        <end position="137"/>
    </location>
</feature>
<proteinExistence type="inferred from homology"/>
<reference key="1">
    <citation type="journal article" date="2010" name="Stand. Genomic Sci.">
        <title>Complete genome sequence of Rhizobium leguminosarum bv trifolii strain WSM2304, an effective microsymbiont of the South American clover Trifolium polymorphum.</title>
        <authorList>
            <person name="Reeve W."/>
            <person name="O'Hara G."/>
            <person name="Chain P."/>
            <person name="Ardley J."/>
            <person name="Brau L."/>
            <person name="Nandesena K."/>
            <person name="Tiwari R."/>
            <person name="Malfatti S."/>
            <person name="Kiss H."/>
            <person name="Lapidus A."/>
            <person name="Copeland A."/>
            <person name="Nolan M."/>
            <person name="Land M."/>
            <person name="Ivanova N."/>
            <person name="Mavromatis K."/>
            <person name="Markowitz V."/>
            <person name="Kyrpides N."/>
            <person name="Melino V."/>
            <person name="Denton M."/>
            <person name="Yates R."/>
            <person name="Howieson J."/>
        </authorList>
    </citation>
    <scope>NUCLEOTIDE SEQUENCE [LARGE SCALE GENOMIC DNA]</scope>
    <source>
        <strain>WSM2304</strain>
    </source>
</reference>
<organism>
    <name type="scientific">Rhizobium leguminosarum bv. trifolii (strain WSM2304)</name>
    <dbReference type="NCBI Taxonomy" id="395492"/>
    <lineage>
        <taxon>Bacteria</taxon>
        <taxon>Pseudomonadati</taxon>
        <taxon>Pseudomonadota</taxon>
        <taxon>Alphaproteobacteria</taxon>
        <taxon>Hyphomicrobiales</taxon>
        <taxon>Rhizobiaceae</taxon>
        <taxon>Rhizobium/Agrobacterium group</taxon>
        <taxon>Rhizobium</taxon>
    </lineage>
</organism>
<dbReference type="EMBL" id="CP001191">
    <property type="protein sequence ID" value="ACI54633.1"/>
    <property type="molecule type" value="Genomic_DNA"/>
</dbReference>
<dbReference type="RefSeq" id="WP_003547555.1">
    <property type="nucleotide sequence ID" value="NC_011369.1"/>
</dbReference>
<dbReference type="SMR" id="B5ZYU2"/>
<dbReference type="STRING" id="395492.Rleg2_1339"/>
<dbReference type="GeneID" id="84669494"/>
<dbReference type="KEGG" id="rlt:Rleg2_1339"/>
<dbReference type="eggNOG" id="COG0197">
    <property type="taxonomic scope" value="Bacteria"/>
</dbReference>
<dbReference type="HOGENOM" id="CLU_078858_2_1_5"/>
<dbReference type="Proteomes" id="UP000008330">
    <property type="component" value="Chromosome"/>
</dbReference>
<dbReference type="GO" id="GO:0022625">
    <property type="term" value="C:cytosolic large ribosomal subunit"/>
    <property type="evidence" value="ECO:0007669"/>
    <property type="project" value="TreeGrafter"/>
</dbReference>
<dbReference type="GO" id="GO:0019843">
    <property type="term" value="F:rRNA binding"/>
    <property type="evidence" value="ECO:0007669"/>
    <property type="project" value="UniProtKB-UniRule"/>
</dbReference>
<dbReference type="GO" id="GO:0003735">
    <property type="term" value="F:structural constituent of ribosome"/>
    <property type="evidence" value="ECO:0007669"/>
    <property type="project" value="InterPro"/>
</dbReference>
<dbReference type="GO" id="GO:0000049">
    <property type="term" value="F:tRNA binding"/>
    <property type="evidence" value="ECO:0007669"/>
    <property type="project" value="UniProtKB-KW"/>
</dbReference>
<dbReference type="GO" id="GO:0006412">
    <property type="term" value="P:translation"/>
    <property type="evidence" value="ECO:0007669"/>
    <property type="project" value="UniProtKB-UniRule"/>
</dbReference>
<dbReference type="CDD" id="cd01433">
    <property type="entry name" value="Ribosomal_L16_L10e"/>
    <property type="match status" value="1"/>
</dbReference>
<dbReference type="FunFam" id="3.90.1170.10:FF:000001">
    <property type="entry name" value="50S ribosomal protein L16"/>
    <property type="match status" value="1"/>
</dbReference>
<dbReference type="Gene3D" id="3.90.1170.10">
    <property type="entry name" value="Ribosomal protein L10e/L16"/>
    <property type="match status" value="1"/>
</dbReference>
<dbReference type="HAMAP" id="MF_01342">
    <property type="entry name" value="Ribosomal_uL16"/>
    <property type="match status" value="1"/>
</dbReference>
<dbReference type="InterPro" id="IPR047873">
    <property type="entry name" value="Ribosomal_uL16"/>
</dbReference>
<dbReference type="InterPro" id="IPR000114">
    <property type="entry name" value="Ribosomal_uL16_bact-type"/>
</dbReference>
<dbReference type="InterPro" id="IPR020798">
    <property type="entry name" value="Ribosomal_uL16_CS"/>
</dbReference>
<dbReference type="InterPro" id="IPR016180">
    <property type="entry name" value="Ribosomal_uL16_dom"/>
</dbReference>
<dbReference type="InterPro" id="IPR036920">
    <property type="entry name" value="Ribosomal_uL16_sf"/>
</dbReference>
<dbReference type="NCBIfam" id="TIGR01164">
    <property type="entry name" value="rplP_bact"/>
    <property type="match status" value="1"/>
</dbReference>
<dbReference type="PANTHER" id="PTHR12220">
    <property type="entry name" value="50S/60S RIBOSOMAL PROTEIN L16"/>
    <property type="match status" value="1"/>
</dbReference>
<dbReference type="PANTHER" id="PTHR12220:SF13">
    <property type="entry name" value="LARGE RIBOSOMAL SUBUNIT PROTEIN UL16M"/>
    <property type="match status" value="1"/>
</dbReference>
<dbReference type="Pfam" id="PF00252">
    <property type="entry name" value="Ribosomal_L16"/>
    <property type="match status" value="1"/>
</dbReference>
<dbReference type="PRINTS" id="PR00060">
    <property type="entry name" value="RIBOSOMALL16"/>
</dbReference>
<dbReference type="SUPFAM" id="SSF54686">
    <property type="entry name" value="Ribosomal protein L16p/L10e"/>
    <property type="match status" value="1"/>
</dbReference>
<dbReference type="PROSITE" id="PS00586">
    <property type="entry name" value="RIBOSOMAL_L16_1"/>
    <property type="match status" value="1"/>
</dbReference>
<dbReference type="PROSITE" id="PS00701">
    <property type="entry name" value="RIBOSOMAL_L16_2"/>
    <property type="match status" value="1"/>
</dbReference>
<accession>B5ZYU2</accession>
<sequence length="137" mass="15584">MLQPKRTKYRKQFKGRIKGVAKGGSDLAFGEFGLKAQEPNRVNAREIEAARRAITRYMKRAGRVWIRVFPDVPVTKKPTEVRMGKGKGSVEYWACKVKPGRMMFEIDGVSEEIAREALRLGSAKLSVKTRFVQRIAE</sequence>